<reference key="1">
    <citation type="journal article" date="1997" name="Nature">
        <title>The complete genome sequence of the Gram-positive bacterium Bacillus subtilis.</title>
        <authorList>
            <person name="Kunst F."/>
            <person name="Ogasawara N."/>
            <person name="Moszer I."/>
            <person name="Albertini A.M."/>
            <person name="Alloni G."/>
            <person name="Azevedo V."/>
            <person name="Bertero M.G."/>
            <person name="Bessieres P."/>
            <person name="Bolotin A."/>
            <person name="Borchert S."/>
            <person name="Borriss R."/>
            <person name="Boursier L."/>
            <person name="Brans A."/>
            <person name="Braun M."/>
            <person name="Brignell S.C."/>
            <person name="Bron S."/>
            <person name="Brouillet S."/>
            <person name="Bruschi C.V."/>
            <person name="Caldwell B."/>
            <person name="Capuano V."/>
            <person name="Carter N.M."/>
            <person name="Choi S.-K."/>
            <person name="Codani J.-J."/>
            <person name="Connerton I.F."/>
            <person name="Cummings N.J."/>
            <person name="Daniel R.A."/>
            <person name="Denizot F."/>
            <person name="Devine K.M."/>
            <person name="Duesterhoeft A."/>
            <person name="Ehrlich S.D."/>
            <person name="Emmerson P.T."/>
            <person name="Entian K.-D."/>
            <person name="Errington J."/>
            <person name="Fabret C."/>
            <person name="Ferrari E."/>
            <person name="Foulger D."/>
            <person name="Fritz C."/>
            <person name="Fujita M."/>
            <person name="Fujita Y."/>
            <person name="Fuma S."/>
            <person name="Galizzi A."/>
            <person name="Galleron N."/>
            <person name="Ghim S.-Y."/>
            <person name="Glaser P."/>
            <person name="Goffeau A."/>
            <person name="Golightly E.J."/>
            <person name="Grandi G."/>
            <person name="Guiseppi G."/>
            <person name="Guy B.J."/>
            <person name="Haga K."/>
            <person name="Haiech J."/>
            <person name="Harwood C.R."/>
            <person name="Henaut A."/>
            <person name="Hilbert H."/>
            <person name="Holsappel S."/>
            <person name="Hosono S."/>
            <person name="Hullo M.-F."/>
            <person name="Itaya M."/>
            <person name="Jones L.-M."/>
            <person name="Joris B."/>
            <person name="Karamata D."/>
            <person name="Kasahara Y."/>
            <person name="Klaerr-Blanchard M."/>
            <person name="Klein C."/>
            <person name="Kobayashi Y."/>
            <person name="Koetter P."/>
            <person name="Koningstein G."/>
            <person name="Krogh S."/>
            <person name="Kumano M."/>
            <person name="Kurita K."/>
            <person name="Lapidus A."/>
            <person name="Lardinois S."/>
            <person name="Lauber J."/>
            <person name="Lazarevic V."/>
            <person name="Lee S.-M."/>
            <person name="Levine A."/>
            <person name="Liu H."/>
            <person name="Masuda S."/>
            <person name="Mauel C."/>
            <person name="Medigue C."/>
            <person name="Medina N."/>
            <person name="Mellado R.P."/>
            <person name="Mizuno M."/>
            <person name="Moestl D."/>
            <person name="Nakai S."/>
            <person name="Noback M."/>
            <person name="Noone D."/>
            <person name="O'Reilly M."/>
            <person name="Ogawa K."/>
            <person name="Ogiwara A."/>
            <person name="Oudega B."/>
            <person name="Park S.-H."/>
            <person name="Parro V."/>
            <person name="Pohl T.M."/>
            <person name="Portetelle D."/>
            <person name="Porwollik S."/>
            <person name="Prescott A.M."/>
            <person name="Presecan E."/>
            <person name="Pujic P."/>
            <person name="Purnelle B."/>
            <person name="Rapoport G."/>
            <person name="Rey M."/>
            <person name="Reynolds S."/>
            <person name="Rieger M."/>
            <person name="Rivolta C."/>
            <person name="Rocha E."/>
            <person name="Roche B."/>
            <person name="Rose M."/>
            <person name="Sadaie Y."/>
            <person name="Sato T."/>
            <person name="Scanlan E."/>
            <person name="Schleich S."/>
            <person name="Schroeter R."/>
            <person name="Scoffone F."/>
            <person name="Sekiguchi J."/>
            <person name="Sekowska A."/>
            <person name="Seror S.J."/>
            <person name="Serror P."/>
            <person name="Shin B.-S."/>
            <person name="Soldo B."/>
            <person name="Sorokin A."/>
            <person name="Tacconi E."/>
            <person name="Takagi T."/>
            <person name="Takahashi H."/>
            <person name="Takemaru K."/>
            <person name="Takeuchi M."/>
            <person name="Tamakoshi A."/>
            <person name="Tanaka T."/>
            <person name="Terpstra P."/>
            <person name="Tognoni A."/>
            <person name="Tosato V."/>
            <person name="Uchiyama S."/>
            <person name="Vandenbol M."/>
            <person name="Vannier F."/>
            <person name="Vassarotti A."/>
            <person name="Viari A."/>
            <person name="Wambutt R."/>
            <person name="Wedler E."/>
            <person name="Wedler H."/>
            <person name="Weitzenegger T."/>
            <person name="Winters P."/>
            <person name="Wipat A."/>
            <person name="Yamamoto H."/>
            <person name="Yamane K."/>
            <person name="Yasumoto K."/>
            <person name="Yata K."/>
            <person name="Yoshida K."/>
            <person name="Yoshikawa H.-F."/>
            <person name="Zumstein E."/>
            <person name="Yoshikawa H."/>
            <person name="Danchin A."/>
        </authorList>
    </citation>
    <scope>NUCLEOTIDE SEQUENCE [LARGE SCALE GENOMIC DNA]</scope>
    <source>
        <strain>168</strain>
    </source>
</reference>
<evidence type="ECO:0000250" key="1"/>
<evidence type="ECO:0000255" key="2"/>
<evidence type="ECO:0000305" key="3"/>
<accession>O32033</accession>
<organism>
    <name type="scientific">Bacillus subtilis (strain 168)</name>
    <dbReference type="NCBI Taxonomy" id="224308"/>
    <lineage>
        <taxon>Bacteria</taxon>
        <taxon>Bacillati</taxon>
        <taxon>Bacillota</taxon>
        <taxon>Bacilli</taxon>
        <taxon>Bacillales</taxon>
        <taxon>Bacillaceae</taxon>
        <taxon>Bacillus</taxon>
    </lineage>
</organism>
<comment type="catalytic activity">
    <reaction>
        <text>uridine + ATP = UMP + ADP + H(+)</text>
        <dbReference type="Rhea" id="RHEA:16825"/>
        <dbReference type="ChEBI" id="CHEBI:15378"/>
        <dbReference type="ChEBI" id="CHEBI:16704"/>
        <dbReference type="ChEBI" id="CHEBI:30616"/>
        <dbReference type="ChEBI" id="CHEBI:57865"/>
        <dbReference type="ChEBI" id="CHEBI:456216"/>
        <dbReference type="EC" id="2.7.1.48"/>
    </reaction>
</comment>
<comment type="catalytic activity">
    <reaction>
        <text>cytidine + ATP = CMP + ADP + H(+)</text>
        <dbReference type="Rhea" id="RHEA:24674"/>
        <dbReference type="ChEBI" id="CHEBI:15378"/>
        <dbReference type="ChEBI" id="CHEBI:17562"/>
        <dbReference type="ChEBI" id="CHEBI:30616"/>
        <dbReference type="ChEBI" id="CHEBI:60377"/>
        <dbReference type="ChEBI" id="CHEBI:456216"/>
        <dbReference type="EC" id="2.7.1.48"/>
    </reaction>
</comment>
<comment type="pathway">
    <text>Pyrimidine metabolism; CTP biosynthesis via salvage pathway; CTP from cytidine: step 1/3.</text>
</comment>
<comment type="pathway">
    <text>Pyrimidine metabolism; UMP biosynthesis via salvage pathway; UMP from uridine: step 1/1.</text>
</comment>
<comment type="subcellular location">
    <subcellularLocation>
        <location evidence="1">Cytoplasm</location>
    </subcellularLocation>
</comment>
<comment type="similarity">
    <text evidence="3">Belongs to the uridine kinase family.</text>
</comment>
<gene>
    <name type="primary">udk</name>
    <name type="ordered locus">BSU27330</name>
</gene>
<proteinExistence type="inferred from homology"/>
<feature type="chain" id="PRO_0000164464" description="Uridine kinase">
    <location>
        <begin position="1"/>
        <end position="211"/>
    </location>
</feature>
<feature type="binding site" evidence="2">
    <location>
        <begin position="12"/>
        <end position="19"/>
    </location>
    <ligand>
        <name>ATP</name>
        <dbReference type="ChEBI" id="CHEBI:30616"/>
    </ligand>
</feature>
<sequence length="211" mass="24487">MGKNPVVIGIAGGSGSGKTSVTRSIYEQFKGHSILMIQQDLYYKDQSHLPFEERLNTNYDHPLAFDNDYLIEHIQDLLNYRPIEKPIYDYKLHTRSEETVHVEPKDVIILEGILVLEDKRLRDLMDIKLYVDTDADLRIIRRIMRDINERGRSIDSVIEQYVSVVRPMHNQFVEPTKRYADIIIPEGGQNHVAIDLMVTKIQTILEQNAIL</sequence>
<keyword id="KW-0067">ATP-binding</keyword>
<keyword id="KW-0963">Cytoplasm</keyword>
<keyword id="KW-0418">Kinase</keyword>
<keyword id="KW-0547">Nucleotide-binding</keyword>
<keyword id="KW-1185">Reference proteome</keyword>
<keyword id="KW-0808">Transferase</keyword>
<name>URK_BACSU</name>
<dbReference type="EC" id="2.7.1.48"/>
<dbReference type="EMBL" id="AL009126">
    <property type="protein sequence ID" value="CAB14675.1"/>
    <property type="molecule type" value="Genomic_DNA"/>
</dbReference>
<dbReference type="PIR" id="G69728">
    <property type="entry name" value="G69728"/>
</dbReference>
<dbReference type="RefSeq" id="NP_390611.1">
    <property type="nucleotide sequence ID" value="NC_000964.3"/>
</dbReference>
<dbReference type="RefSeq" id="WP_003225916.1">
    <property type="nucleotide sequence ID" value="NZ_OZ025638.1"/>
</dbReference>
<dbReference type="SMR" id="O32033"/>
<dbReference type="FunCoup" id="O32033">
    <property type="interactions" value="391"/>
</dbReference>
<dbReference type="STRING" id="224308.BSU27330"/>
<dbReference type="jPOST" id="O32033"/>
<dbReference type="PaxDb" id="224308-BSU27330"/>
<dbReference type="EnsemblBacteria" id="CAB14675">
    <property type="protein sequence ID" value="CAB14675"/>
    <property type="gene ID" value="BSU_27330"/>
</dbReference>
<dbReference type="GeneID" id="86872757"/>
<dbReference type="GeneID" id="937560"/>
<dbReference type="KEGG" id="bsu:BSU27330"/>
<dbReference type="PATRIC" id="fig|224308.179.peg.2969"/>
<dbReference type="eggNOG" id="COG0572">
    <property type="taxonomic scope" value="Bacteria"/>
</dbReference>
<dbReference type="InParanoid" id="O32033"/>
<dbReference type="OrthoDB" id="9777642at2"/>
<dbReference type="PhylomeDB" id="O32033"/>
<dbReference type="BioCyc" id="BSUB:BSU27330-MONOMER"/>
<dbReference type="UniPathway" id="UPA00574">
    <property type="reaction ID" value="UER00637"/>
</dbReference>
<dbReference type="UniPathway" id="UPA00579">
    <property type="reaction ID" value="UER00640"/>
</dbReference>
<dbReference type="PRO" id="PR:O32033"/>
<dbReference type="Proteomes" id="UP000001570">
    <property type="component" value="Chromosome"/>
</dbReference>
<dbReference type="GO" id="GO:0005737">
    <property type="term" value="C:cytoplasm"/>
    <property type="evidence" value="ECO:0000318"/>
    <property type="project" value="GO_Central"/>
</dbReference>
<dbReference type="GO" id="GO:0005524">
    <property type="term" value="F:ATP binding"/>
    <property type="evidence" value="ECO:0007669"/>
    <property type="project" value="UniProtKB-UniRule"/>
</dbReference>
<dbReference type="GO" id="GO:0043771">
    <property type="term" value="F:cytidine kinase activity"/>
    <property type="evidence" value="ECO:0007669"/>
    <property type="project" value="RHEA"/>
</dbReference>
<dbReference type="GO" id="GO:0004849">
    <property type="term" value="F:uridine kinase activity"/>
    <property type="evidence" value="ECO:0007669"/>
    <property type="project" value="UniProtKB-UniRule"/>
</dbReference>
<dbReference type="GO" id="GO:0044211">
    <property type="term" value="P:CTP salvage"/>
    <property type="evidence" value="ECO:0007669"/>
    <property type="project" value="UniProtKB-UniRule"/>
</dbReference>
<dbReference type="GO" id="GO:0044206">
    <property type="term" value="P:UMP salvage"/>
    <property type="evidence" value="ECO:0007669"/>
    <property type="project" value="UniProtKB-UniRule"/>
</dbReference>
<dbReference type="CDD" id="cd02023">
    <property type="entry name" value="UMPK"/>
    <property type="match status" value="1"/>
</dbReference>
<dbReference type="Gene3D" id="3.40.50.300">
    <property type="entry name" value="P-loop containing nucleotide triphosphate hydrolases"/>
    <property type="match status" value="1"/>
</dbReference>
<dbReference type="HAMAP" id="MF_00551">
    <property type="entry name" value="Uridine_kinase"/>
    <property type="match status" value="1"/>
</dbReference>
<dbReference type="InterPro" id="IPR027417">
    <property type="entry name" value="P-loop_NTPase"/>
</dbReference>
<dbReference type="InterPro" id="IPR006083">
    <property type="entry name" value="PRK/URK"/>
</dbReference>
<dbReference type="InterPro" id="IPR026008">
    <property type="entry name" value="Uridine_kinase"/>
</dbReference>
<dbReference type="InterPro" id="IPR000764">
    <property type="entry name" value="Uridine_kinase-like"/>
</dbReference>
<dbReference type="NCBIfam" id="NF004018">
    <property type="entry name" value="PRK05480.1"/>
    <property type="match status" value="1"/>
</dbReference>
<dbReference type="NCBIfam" id="TIGR00235">
    <property type="entry name" value="udk"/>
    <property type="match status" value="1"/>
</dbReference>
<dbReference type="PANTHER" id="PTHR10285">
    <property type="entry name" value="URIDINE KINASE"/>
    <property type="match status" value="1"/>
</dbReference>
<dbReference type="Pfam" id="PF00485">
    <property type="entry name" value="PRK"/>
    <property type="match status" value="1"/>
</dbReference>
<dbReference type="PRINTS" id="PR00988">
    <property type="entry name" value="URIDINKINASE"/>
</dbReference>
<dbReference type="SUPFAM" id="SSF52540">
    <property type="entry name" value="P-loop containing nucleoside triphosphate hydrolases"/>
    <property type="match status" value="1"/>
</dbReference>
<protein>
    <recommendedName>
        <fullName>Uridine kinase</fullName>
        <ecNumber>2.7.1.48</ecNumber>
    </recommendedName>
    <alternativeName>
        <fullName>Cytidine monophosphokinase</fullName>
    </alternativeName>
    <alternativeName>
        <fullName>Uridine monophosphokinase</fullName>
    </alternativeName>
</protein>